<comment type="function">
    <text evidence="1">Removes the formyl group from the N-terminal Met of newly synthesized proteins. Requires at least a dipeptide for an efficient rate of reaction. N-terminal L-methionine is a prerequisite for activity but the enzyme has broad specificity at other positions.</text>
</comment>
<comment type="catalytic activity">
    <reaction evidence="1">
        <text>N-terminal N-formyl-L-methionyl-[peptide] + H2O = N-terminal L-methionyl-[peptide] + formate</text>
        <dbReference type="Rhea" id="RHEA:24420"/>
        <dbReference type="Rhea" id="RHEA-COMP:10639"/>
        <dbReference type="Rhea" id="RHEA-COMP:10640"/>
        <dbReference type="ChEBI" id="CHEBI:15377"/>
        <dbReference type="ChEBI" id="CHEBI:15740"/>
        <dbReference type="ChEBI" id="CHEBI:49298"/>
        <dbReference type="ChEBI" id="CHEBI:64731"/>
        <dbReference type="EC" id="3.5.1.88"/>
    </reaction>
</comment>
<comment type="cofactor">
    <cofactor evidence="1">
        <name>Fe(2+)</name>
        <dbReference type="ChEBI" id="CHEBI:29033"/>
    </cofactor>
    <text evidence="1">Binds 1 Fe(2+) ion.</text>
</comment>
<comment type="similarity">
    <text evidence="1">Belongs to the polypeptide deformylase family.</text>
</comment>
<proteinExistence type="inferred from homology"/>
<protein>
    <recommendedName>
        <fullName evidence="1">Peptide deformylase</fullName>
        <shortName evidence="1">PDF</shortName>
        <ecNumber evidence="1">3.5.1.88</ecNumber>
    </recommendedName>
    <alternativeName>
        <fullName evidence="1">Polypeptide deformylase</fullName>
    </alternativeName>
</protein>
<gene>
    <name evidence="1" type="primary">def</name>
    <name type="ordered locus">SPJ_1355</name>
</gene>
<evidence type="ECO:0000255" key="1">
    <source>
        <dbReference type="HAMAP-Rule" id="MF_00163"/>
    </source>
</evidence>
<sequence>MSAIERITKAAHLIDMNDIIREGNPTLRTVAEEVTFPLSDQEIILGEKMMQFLKHSQDPVMAEKMGLRGGVGLAAPQLDISKRIIAVLVPNIVEEGETPQEAYDLEAIMYNPKIVSHSVQDAALGEGEGCLSVDRNVPGYVVRHARVTVDYFDKDGEKHRIKLKGYNSIVVQHEIDHINGIMFYDRINEKDPFAVKDGLLILE</sequence>
<feature type="chain" id="PRO_1000200749" description="Peptide deformylase">
    <location>
        <begin position="1"/>
        <end position="203"/>
    </location>
</feature>
<feature type="active site" evidence="1">
    <location>
        <position position="174"/>
    </location>
</feature>
<feature type="binding site" evidence="1">
    <location>
        <position position="130"/>
    </location>
    <ligand>
        <name>Fe cation</name>
        <dbReference type="ChEBI" id="CHEBI:24875"/>
    </ligand>
</feature>
<feature type="binding site" evidence="1">
    <location>
        <position position="173"/>
    </location>
    <ligand>
        <name>Fe cation</name>
        <dbReference type="ChEBI" id="CHEBI:24875"/>
    </ligand>
</feature>
<feature type="binding site" evidence="1">
    <location>
        <position position="177"/>
    </location>
    <ligand>
        <name>Fe cation</name>
        <dbReference type="ChEBI" id="CHEBI:24875"/>
    </ligand>
</feature>
<keyword id="KW-0378">Hydrolase</keyword>
<keyword id="KW-0408">Iron</keyword>
<keyword id="KW-0479">Metal-binding</keyword>
<keyword id="KW-0648">Protein biosynthesis</keyword>
<accession>C1CF38</accession>
<reference key="1">
    <citation type="journal article" date="2010" name="Genome Biol.">
        <title>Structure and dynamics of the pan-genome of Streptococcus pneumoniae and closely related species.</title>
        <authorList>
            <person name="Donati C."/>
            <person name="Hiller N.L."/>
            <person name="Tettelin H."/>
            <person name="Muzzi A."/>
            <person name="Croucher N.J."/>
            <person name="Angiuoli S.V."/>
            <person name="Oggioni M."/>
            <person name="Dunning Hotopp J.C."/>
            <person name="Hu F.Z."/>
            <person name="Riley D.R."/>
            <person name="Covacci A."/>
            <person name="Mitchell T.J."/>
            <person name="Bentley S.D."/>
            <person name="Kilian M."/>
            <person name="Ehrlich G.D."/>
            <person name="Rappuoli R."/>
            <person name="Moxon E.R."/>
            <person name="Masignani V."/>
        </authorList>
    </citation>
    <scope>NUCLEOTIDE SEQUENCE [LARGE SCALE GENOMIC DNA]</scope>
    <source>
        <strain>JJA</strain>
    </source>
</reference>
<dbReference type="EC" id="3.5.1.88" evidence="1"/>
<dbReference type="EMBL" id="CP000919">
    <property type="protein sequence ID" value="ACO18819.1"/>
    <property type="molecule type" value="Genomic_DNA"/>
</dbReference>
<dbReference type="RefSeq" id="WP_001272961.1">
    <property type="nucleotide sequence ID" value="NC_012466.1"/>
</dbReference>
<dbReference type="SMR" id="C1CF38"/>
<dbReference type="GeneID" id="45218269"/>
<dbReference type="KEGG" id="sjj:SPJ_1355"/>
<dbReference type="HOGENOM" id="CLU_061901_4_0_9"/>
<dbReference type="Proteomes" id="UP000002206">
    <property type="component" value="Chromosome"/>
</dbReference>
<dbReference type="GO" id="GO:0046872">
    <property type="term" value="F:metal ion binding"/>
    <property type="evidence" value="ECO:0007669"/>
    <property type="project" value="UniProtKB-KW"/>
</dbReference>
<dbReference type="GO" id="GO:0042586">
    <property type="term" value="F:peptide deformylase activity"/>
    <property type="evidence" value="ECO:0007669"/>
    <property type="project" value="UniProtKB-UniRule"/>
</dbReference>
<dbReference type="GO" id="GO:0043686">
    <property type="term" value="P:co-translational protein modification"/>
    <property type="evidence" value="ECO:0007669"/>
    <property type="project" value="TreeGrafter"/>
</dbReference>
<dbReference type="GO" id="GO:0006412">
    <property type="term" value="P:translation"/>
    <property type="evidence" value="ECO:0007669"/>
    <property type="project" value="UniProtKB-UniRule"/>
</dbReference>
<dbReference type="CDD" id="cd00487">
    <property type="entry name" value="Pep_deformylase"/>
    <property type="match status" value="1"/>
</dbReference>
<dbReference type="FunFam" id="3.90.45.10:FF:000002">
    <property type="entry name" value="Peptide deformylase"/>
    <property type="match status" value="1"/>
</dbReference>
<dbReference type="Gene3D" id="3.90.45.10">
    <property type="entry name" value="Peptide deformylase"/>
    <property type="match status" value="1"/>
</dbReference>
<dbReference type="HAMAP" id="MF_00163">
    <property type="entry name" value="Pep_deformylase"/>
    <property type="match status" value="1"/>
</dbReference>
<dbReference type="InterPro" id="IPR023635">
    <property type="entry name" value="Peptide_deformylase"/>
</dbReference>
<dbReference type="InterPro" id="IPR036821">
    <property type="entry name" value="Peptide_deformylase_sf"/>
</dbReference>
<dbReference type="NCBIfam" id="TIGR00079">
    <property type="entry name" value="pept_deformyl"/>
    <property type="match status" value="1"/>
</dbReference>
<dbReference type="PANTHER" id="PTHR10458">
    <property type="entry name" value="PEPTIDE DEFORMYLASE"/>
    <property type="match status" value="1"/>
</dbReference>
<dbReference type="PANTHER" id="PTHR10458:SF8">
    <property type="entry name" value="PEPTIDE DEFORMYLASE 2"/>
    <property type="match status" value="1"/>
</dbReference>
<dbReference type="Pfam" id="PF01327">
    <property type="entry name" value="Pep_deformylase"/>
    <property type="match status" value="1"/>
</dbReference>
<dbReference type="PIRSF" id="PIRSF004749">
    <property type="entry name" value="Pep_def"/>
    <property type="match status" value="1"/>
</dbReference>
<dbReference type="PRINTS" id="PR01576">
    <property type="entry name" value="PDEFORMYLASE"/>
</dbReference>
<dbReference type="SUPFAM" id="SSF56420">
    <property type="entry name" value="Peptide deformylase"/>
    <property type="match status" value="1"/>
</dbReference>
<organism>
    <name type="scientific">Streptococcus pneumoniae (strain JJA)</name>
    <dbReference type="NCBI Taxonomy" id="488222"/>
    <lineage>
        <taxon>Bacteria</taxon>
        <taxon>Bacillati</taxon>
        <taxon>Bacillota</taxon>
        <taxon>Bacilli</taxon>
        <taxon>Lactobacillales</taxon>
        <taxon>Streptococcaceae</taxon>
        <taxon>Streptococcus</taxon>
    </lineage>
</organism>
<name>DEF_STRZJ</name>